<reference key="1">
    <citation type="submission" date="2007-04" db="EMBL/GenBank/DDBJ databases">
        <title>Complete sequence of Pseudomonas mendocina ymp.</title>
        <authorList>
            <consortium name="US DOE Joint Genome Institute"/>
            <person name="Copeland A."/>
            <person name="Lucas S."/>
            <person name="Lapidus A."/>
            <person name="Barry K."/>
            <person name="Glavina del Rio T."/>
            <person name="Dalin E."/>
            <person name="Tice H."/>
            <person name="Pitluck S."/>
            <person name="Kiss H."/>
            <person name="Brettin T."/>
            <person name="Detter J.C."/>
            <person name="Bruce D."/>
            <person name="Han C."/>
            <person name="Schmutz J."/>
            <person name="Larimer F."/>
            <person name="Land M."/>
            <person name="Hauser L."/>
            <person name="Kyrpides N."/>
            <person name="Mikhailova N."/>
            <person name="Hersman L."/>
            <person name="Dubois J."/>
            <person name="Maurice P."/>
            <person name="Richardson P."/>
        </authorList>
    </citation>
    <scope>NUCLEOTIDE SEQUENCE [LARGE SCALE GENOMIC DNA]</scope>
    <source>
        <strain>ymp</strain>
    </source>
</reference>
<organism>
    <name type="scientific">Ectopseudomonas mendocina (strain ymp)</name>
    <name type="common">Pseudomonas mendocina</name>
    <dbReference type="NCBI Taxonomy" id="399739"/>
    <lineage>
        <taxon>Bacteria</taxon>
        <taxon>Pseudomonadati</taxon>
        <taxon>Pseudomonadota</taxon>
        <taxon>Gammaproteobacteria</taxon>
        <taxon>Pseudomonadales</taxon>
        <taxon>Pseudomonadaceae</taxon>
        <taxon>Ectopseudomonas</taxon>
    </lineage>
</organism>
<feature type="chain" id="PRO_1000065849" description="UPF0434 protein Pmen_1615">
    <location>
        <begin position="1"/>
        <end position="61"/>
    </location>
</feature>
<sequence length="61" mass="6686">MDLKLLDILACPICKGPLQLSEDKTELISKGAGVAYPIRDGIPVMLESEARTLTTDERLDK</sequence>
<evidence type="ECO:0000255" key="1">
    <source>
        <dbReference type="HAMAP-Rule" id="MF_01187"/>
    </source>
</evidence>
<protein>
    <recommendedName>
        <fullName evidence="1">UPF0434 protein Pmen_1615</fullName>
    </recommendedName>
</protein>
<comment type="similarity">
    <text evidence="1">Belongs to the UPF0434 family.</text>
</comment>
<proteinExistence type="inferred from homology"/>
<accession>A4XSR3</accession>
<dbReference type="EMBL" id="CP000680">
    <property type="protein sequence ID" value="ABP84379.1"/>
    <property type="molecule type" value="Genomic_DNA"/>
</dbReference>
<dbReference type="SMR" id="A4XSR3"/>
<dbReference type="STRING" id="399739.Pmen_1615"/>
<dbReference type="KEGG" id="pmy:Pmen_1615"/>
<dbReference type="eggNOG" id="COG2835">
    <property type="taxonomic scope" value="Bacteria"/>
</dbReference>
<dbReference type="HOGENOM" id="CLU_155659_2_2_6"/>
<dbReference type="OrthoDB" id="9812205at2"/>
<dbReference type="GO" id="GO:0005829">
    <property type="term" value="C:cytosol"/>
    <property type="evidence" value="ECO:0007669"/>
    <property type="project" value="TreeGrafter"/>
</dbReference>
<dbReference type="FunFam" id="2.20.25.10:FF:000002">
    <property type="entry name" value="UPF0434 protein YcaR"/>
    <property type="match status" value="1"/>
</dbReference>
<dbReference type="Gene3D" id="2.20.25.10">
    <property type="match status" value="1"/>
</dbReference>
<dbReference type="HAMAP" id="MF_01187">
    <property type="entry name" value="UPF0434"/>
    <property type="match status" value="1"/>
</dbReference>
<dbReference type="InterPro" id="IPR005651">
    <property type="entry name" value="Trm112-like"/>
</dbReference>
<dbReference type="PANTHER" id="PTHR33505:SF4">
    <property type="entry name" value="PROTEIN PREY, MITOCHONDRIAL"/>
    <property type="match status" value="1"/>
</dbReference>
<dbReference type="PANTHER" id="PTHR33505">
    <property type="entry name" value="ZGC:162634"/>
    <property type="match status" value="1"/>
</dbReference>
<dbReference type="Pfam" id="PF03966">
    <property type="entry name" value="Trm112p"/>
    <property type="match status" value="1"/>
</dbReference>
<dbReference type="SUPFAM" id="SSF158997">
    <property type="entry name" value="Trm112p-like"/>
    <property type="match status" value="1"/>
</dbReference>
<gene>
    <name type="ordered locus">Pmen_1615</name>
</gene>
<name>Y1615_ECTM1</name>